<gene>
    <name evidence="1" type="primary">hemA</name>
    <name type="ordered locus">HSM_1279</name>
</gene>
<organism>
    <name type="scientific">Histophilus somni (strain 2336)</name>
    <name type="common">Haemophilus somnus</name>
    <dbReference type="NCBI Taxonomy" id="228400"/>
    <lineage>
        <taxon>Bacteria</taxon>
        <taxon>Pseudomonadati</taxon>
        <taxon>Pseudomonadota</taxon>
        <taxon>Gammaproteobacteria</taxon>
        <taxon>Pasteurellales</taxon>
        <taxon>Pasteurellaceae</taxon>
        <taxon>Histophilus</taxon>
    </lineage>
</organism>
<evidence type="ECO:0000255" key="1">
    <source>
        <dbReference type="HAMAP-Rule" id="MF_00087"/>
    </source>
</evidence>
<accession>B0UU02</accession>
<keyword id="KW-0521">NADP</keyword>
<keyword id="KW-0560">Oxidoreductase</keyword>
<keyword id="KW-0627">Porphyrin biosynthesis</keyword>
<feature type="chain" id="PRO_1000093141" description="Glutamyl-tRNA reductase">
    <location>
        <begin position="1"/>
        <end position="433"/>
    </location>
</feature>
<feature type="active site" description="Nucleophile" evidence="1">
    <location>
        <position position="50"/>
    </location>
</feature>
<feature type="binding site" evidence="1">
    <location>
        <begin position="49"/>
        <end position="52"/>
    </location>
    <ligand>
        <name>substrate</name>
    </ligand>
</feature>
<feature type="binding site" evidence="1">
    <location>
        <position position="114"/>
    </location>
    <ligand>
        <name>substrate</name>
    </ligand>
</feature>
<feature type="binding site" evidence="1">
    <location>
        <begin position="119"/>
        <end position="121"/>
    </location>
    <ligand>
        <name>substrate</name>
    </ligand>
</feature>
<feature type="binding site" evidence="1">
    <location>
        <position position="125"/>
    </location>
    <ligand>
        <name>substrate</name>
    </ligand>
</feature>
<feature type="binding site" evidence="1">
    <location>
        <begin position="201"/>
        <end position="206"/>
    </location>
    <ligand>
        <name>NADP(+)</name>
        <dbReference type="ChEBI" id="CHEBI:58349"/>
    </ligand>
</feature>
<feature type="site" description="Important for activity" evidence="1">
    <location>
        <position position="104"/>
    </location>
</feature>
<dbReference type="EC" id="1.2.1.70" evidence="1"/>
<dbReference type="EMBL" id="CP000947">
    <property type="protein sequence ID" value="ACA31008.1"/>
    <property type="molecule type" value="Genomic_DNA"/>
</dbReference>
<dbReference type="RefSeq" id="WP_012340438.1">
    <property type="nucleotide sequence ID" value="NC_010519.1"/>
</dbReference>
<dbReference type="SMR" id="B0UU02"/>
<dbReference type="STRING" id="228400.HSM_1279"/>
<dbReference type="GeneID" id="31487581"/>
<dbReference type="KEGG" id="hsm:HSM_1279"/>
<dbReference type="HOGENOM" id="CLU_035113_2_2_6"/>
<dbReference type="UniPathway" id="UPA00251">
    <property type="reaction ID" value="UER00316"/>
</dbReference>
<dbReference type="GO" id="GO:0008883">
    <property type="term" value="F:glutamyl-tRNA reductase activity"/>
    <property type="evidence" value="ECO:0007669"/>
    <property type="project" value="UniProtKB-UniRule"/>
</dbReference>
<dbReference type="GO" id="GO:0050661">
    <property type="term" value="F:NADP binding"/>
    <property type="evidence" value="ECO:0007669"/>
    <property type="project" value="InterPro"/>
</dbReference>
<dbReference type="GO" id="GO:0019353">
    <property type="term" value="P:protoporphyrinogen IX biosynthetic process from glutamate"/>
    <property type="evidence" value="ECO:0007669"/>
    <property type="project" value="TreeGrafter"/>
</dbReference>
<dbReference type="CDD" id="cd05213">
    <property type="entry name" value="NAD_bind_Glutamyl_tRNA_reduct"/>
    <property type="match status" value="1"/>
</dbReference>
<dbReference type="FunFam" id="3.30.460.30:FF:000001">
    <property type="entry name" value="Glutamyl-tRNA reductase"/>
    <property type="match status" value="1"/>
</dbReference>
<dbReference type="FunFam" id="3.40.50.720:FF:000031">
    <property type="entry name" value="Glutamyl-tRNA reductase"/>
    <property type="match status" value="1"/>
</dbReference>
<dbReference type="Gene3D" id="3.30.460.30">
    <property type="entry name" value="Glutamyl-tRNA reductase, N-terminal domain"/>
    <property type="match status" value="1"/>
</dbReference>
<dbReference type="Gene3D" id="3.40.50.720">
    <property type="entry name" value="NAD(P)-binding Rossmann-like Domain"/>
    <property type="match status" value="1"/>
</dbReference>
<dbReference type="HAMAP" id="MF_00087">
    <property type="entry name" value="Glu_tRNA_reductase"/>
    <property type="match status" value="1"/>
</dbReference>
<dbReference type="InterPro" id="IPR000343">
    <property type="entry name" value="4pyrrol_synth_GluRdtase"/>
</dbReference>
<dbReference type="InterPro" id="IPR015896">
    <property type="entry name" value="4pyrrol_synth_GluRdtase_dimer"/>
</dbReference>
<dbReference type="InterPro" id="IPR015895">
    <property type="entry name" value="4pyrrol_synth_GluRdtase_N"/>
</dbReference>
<dbReference type="InterPro" id="IPR018214">
    <property type="entry name" value="GluRdtase_CS"/>
</dbReference>
<dbReference type="InterPro" id="IPR036453">
    <property type="entry name" value="GluRdtase_dimer_dom_sf"/>
</dbReference>
<dbReference type="InterPro" id="IPR036343">
    <property type="entry name" value="GluRdtase_N_sf"/>
</dbReference>
<dbReference type="InterPro" id="IPR036291">
    <property type="entry name" value="NAD(P)-bd_dom_sf"/>
</dbReference>
<dbReference type="InterPro" id="IPR006151">
    <property type="entry name" value="Shikm_DH/Glu-tRNA_Rdtase"/>
</dbReference>
<dbReference type="NCBIfam" id="TIGR01035">
    <property type="entry name" value="hemA"/>
    <property type="match status" value="1"/>
</dbReference>
<dbReference type="PANTHER" id="PTHR43013">
    <property type="entry name" value="GLUTAMYL-TRNA REDUCTASE"/>
    <property type="match status" value="1"/>
</dbReference>
<dbReference type="PANTHER" id="PTHR43013:SF1">
    <property type="entry name" value="GLUTAMYL-TRNA REDUCTASE"/>
    <property type="match status" value="1"/>
</dbReference>
<dbReference type="Pfam" id="PF00745">
    <property type="entry name" value="GlutR_dimer"/>
    <property type="match status" value="1"/>
</dbReference>
<dbReference type="Pfam" id="PF05201">
    <property type="entry name" value="GlutR_N"/>
    <property type="match status" value="1"/>
</dbReference>
<dbReference type="Pfam" id="PF01488">
    <property type="entry name" value="Shikimate_DH"/>
    <property type="match status" value="1"/>
</dbReference>
<dbReference type="PIRSF" id="PIRSF000445">
    <property type="entry name" value="4pyrrol_synth_GluRdtase"/>
    <property type="match status" value="1"/>
</dbReference>
<dbReference type="SUPFAM" id="SSF69742">
    <property type="entry name" value="Glutamyl tRNA-reductase catalytic, N-terminal domain"/>
    <property type="match status" value="1"/>
</dbReference>
<dbReference type="SUPFAM" id="SSF69075">
    <property type="entry name" value="Glutamyl tRNA-reductase dimerization domain"/>
    <property type="match status" value="1"/>
</dbReference>
<dbReference type="SUPFAM" id="SSF51735">
    <property type="entry name" value="NAD(P)-binding Rossmann-fold domains"/>
    <property type="match status" value="1"/>
</dbReference>
<dbReference type="PROSITE" id="PS00747">
    <property type="entry name" value="GLUTR"/>
    <property type="match status" value="1"/>
</dbReference>
<protein>
    <recommendedName>
        <fullName evidence="1">Glutamyl-tRNA reductase</fullName>
        <shortName evidence="1">GluTR</shortName>
        <ecNumber evidence="1">1.2.1.70</ecNumber>
    </recommendedName>
</protein>
<name>HEM1_HISS2</name>
<sequence>MTILVLGINHKTASVALREKVAFSDEKRLLALKQIKQTQLAECAVILSTCNRTEVYLHNKNVGPQNDEVWLDSCVQWFADIHQVDLEELKSCLYSQQNLQASRHLMRVASGLDSLILGEPQILGQVKQAYQMSEEYYSLHSDIGMMSTELSRLFQKTFATAKRVRTETHIGESAVSVAYAACSLARQIFDSLRNLNILLVGAGETIELVSRHLLRHGVNGLAIANRTLSRAEKLVEKLETTQKIDIFSLDRLSEGLKRADIVITSTGSPHVLISRNLIEQAQQMRHYKPMLIVDIAVPRDVEESAGEIESVYHYTVDDLHNIIQHNINQREQASQQAEHIIQQESADFFEWLKVHQFSNLIRNYRESAEIIRQDLLEKALQALQNGENTEQVLQELSHKLTKKLIHQPTQAMQTMVKAGNTEGLQAFSHAVKS</sequence>
<comment type="function">
    <text evidence="1">Catalyzes the NADPH-dependent reduction of glutamyl-tRNA(Glu) to glutamate 1-semialdehyde (GSA).</text>
</comment>
<comment type="catalytic activity">
    <reaction evidence="1">
        <text>(S)-4-amino-5-oxopentanoate + tRNA(Glu) + NADP(+) = L-glutamyl-tRNA(Glu) + NADPH + H(+)</text>
        <dbReference type="Rhea" id="RHEA:12344"/>
        <dbReference type="Rhea" id="RHEA-COMP:9663"/>
        <dbReference type="Rhea" id="RHEA-COMP:9680"/>
        <dbReference type="ChEBI" id="CHEBI:15378"/>
        <dbReference type="ChEBI" id="CHEBI:57501"/>
        <dbReference type="ChEBI" id="CHEBI:57783"/>
        <dbReference type="ChEBI" id="CHEBI:58349"/>
        <dbReference type="ChEBI" id="CHEBI:78442"/>
        <dbReference type="ChEBI" id="CHEBI:78520"/>
        <dbReference type="EC" id="1.2.1.70"/>
    </reaction>
</comment>
<comment type="pathway">
    <text evidence="1">Porphyrin-containing compound metabolism; protoporphyrin-IX biosynthesis; 5-aminolevulinate from L-glutamyl-tRNA(Glu): step 1/2.</text>
</comment>
<comment type="subunit">
    <text evidence="1">Homodimer.</text>
</comment>
<comment type="domain">
    <text evidence="1">Possesses an unusual extended V-shaped dimeric structure with each monomer consisting of three distinct domains arranged along a curved 'spinal' alpha-helix. The N-terminal catalytic domain specifically recognizes the glutamate moiety of the substrate. The second domain is the NADPH-binding domain, and the third C-terminal domain is responsible for dimerization.</text>
</comment>
<comment type="miscellaneous">
    <text evidence="1">During catalysis, the active site Cys acts as a nucleophile attacking the alpha-carbonyl group of tRNA-bound glutamate with the formation of a thioester intermediate between enzyme and glutamate, and the concomitant release of tRNA(Glu). The thioester intermediate is finally reduced by direct hydride transfer from NADPH, to form the product GSA.</text>
</comment>
<comment type="similarity">
    <text evidence="1">Belongs to the glutamyl-tRNA reductase family.</text>
</comment>
<reference key="1">
    <citation type="submission" date="2008-02" db="EMBL/GenBank/DDBJ databases">
        <title>Complete sequence of Haemophilus somnus 2336.</title>
        <authorList>
            <consortium name="US DOE Joint Genome Institute"/>
            <person name="Siddaramappa S."/>
            <person name="Duncan A.J."/>
            <person name="Challacombe J.F."/>
            <person name="Rainey D."/>
            <person name="Gillaspy A.F."/>
            <person name="Carson M."/>
            <person name="Gipson J."/>
            <person name="Gipson M."/>
            <person name="Bruce D."/>
            <person name="Detter J.C."/>
            <person name="Han C.S."/>
            <person name="Land M."/>
            <person name="Tapia R."/>
            <person name="Thompson L.S."/>
            <person name="Orvis J."/>
            <person name="Zaitshik J."/>
            <person name="Barnes G."/>
            <person name="Brettin T.S."/>
            <person name="Dyer D.W."/>
            <person name="Inzana T.J."/>
        </authorList>
    </citation>
    <scope>NUCLEOTIDE SEQUENCE [LARGE SCALE GENOMIC DNA]</scope>
    <source>
        <strain>2336</strain>
    </source>
</reference>
<proteinExistence type="inferred from homology"/>